<name>NDK4_SPIOL</name>
<evidence type="ECO:0000250" key="1"/>
<evidence type="ECO:0000269" key="2">
    <source>
    </source>
</evidence>
<evidence type="ECO:0000305" key="3"/>
<organism>
    <name type="scientific">Spinacia oleracea</name>
    <name type="common">Spinach</name>
    <dbReference type="NCBI Taxonomy" id="3562"/>
    <lineage>
        <taxon>Eukaryota</taxon>
        <taxon>Viridiplantae</taxon>
        <taxon>Streptophyta</taxon>
        <taxon>Embryophyta</taxon>
        <taxon>Tracheophyta</taxon>
        <taxon>Spermatophyta</taxon>
        <taxon>Magnoliopsida</taxon>
        <taxon>eudicotyledons</taxon>
        <taxon>Gunneridae</taxon>
        <taxon>Pentapetalae</taxon>
        <taxon>Caryophyllales</taxon>
        <taxon>Chenopodiaceae</taxon>
        <taxon>Chenopodioideae</taxon>
        <taxon>Anserineae</taxon>
        <taxon>Spinacia</taxon>
    </lineage>
</organism>
<proteinExistence type="evidence at protein level"/>
<comment type="function">
    <text evidence="1">Major role in the synthesis of nucleoside triphosphates other than ATP. The ATP gamma phosphate is transferred to the NDP beta phosphate via a ping-pong mechanism, using a phosphorylated active-site intermediate. Shows the highest specificity towards GDP (By similarity).</text>
</comment>
<comment type="catalytic activity">
    <reaction>
        <text>a 2'-deoxyribonucleoside 5'-diphosphate + ATP = a 2'-deoxyribonucleoside 5'-triphosphate + ADP</text>
        <dbReference type="Rhea" id="RHEA:44640"/>
        <dbReference type="ChEBI" id="CHEBI:30616"/>
        <dbReference type="ChEBI" id="CHEBI:61560"/>
        <dbReference type="ChEBI" id="CHEBI:73316"/>
        <dbReference type="ChEBI" id="CHEBI:456216"/>
        <dbReference type="EC" id="2.7.4.6"/>
    </reaction>
</comment>
<comment type="catalytic activity">
    <reaction>
        <text>a ribonucleoside 5'-diphosphate + ATP = a ribonucleoside 5'-triphosphate + ADP</text>
        <dbReference type="Rhea" id="RHEA:18113"/>
        <dbReference type="ChEBI" id="CHEBI:30616"/>
        <dbReference type="ChEBI" id="CHEBI:57930"/>
        <dbReference type="ChEBI" id="CHEBI:61557"/>
        <dbReference type="ChEBI" id="CHEBI:456216"/>
        <dbReference type="EC" id="2.7.4.6"/>
    </reaction>
</comment>
<comment type="cofactor">
    <cofactor evidence="1">
        <name>Mg(2+)</name>
        <dbReference type="ChEBI" id="CHEBI:18420"/>
    </cofactor>
</comment>
<comment type="biophysicochemical properties">
    <kinetics>
        <KM>27.4 uM for GDP</KM>
        <KM>89.05 uM for ADP</KM>
    </kinetics>
    <phDependence>
        <text>Optimum pH is 6.0.</text>
    </phDependence>
</comment>
<comment type="subunit">
    <text evidence="3">Homohexamer.</text>
</comment>
<comment type="subcellular location">
    <subcellularLocation>
        <location evidence="2">Plastid</location>
        <location evidence="2">Chloroplast thylakoid lumen</location>
    </subcellularLocation>
</comment>
<comment type="similarity">
    <text evidence="3">Belongs to the NDK family.</text>
</comment>
<comment type="caution">
    <text evidence="3">There are likely two genes coding for two slightly different proteins, NDK3 and NDK4. The characterization was made on a thylakoid lumen preparation containing probably both proteins.</text>
</comment>
<sequence length="235" mass="25685">MRSQIYRSATKAARSFLSSSKNASSRFLPEGRTVAATAAVSLRVKAPYLASFGGANASGTWMSTALAIPAAAYLLQDQEACAAEFERTFIAIKPDGVQRGLISEIVARFERKGFKLVAIKVVIPSKDFAQKHYHDLSERPFFNGLCDFLSSGPVVAMVWEGEGVIKYGRKLIGATDPQKSEPGTIRGDLAVVVGRNIIHGSDGPETAKDEIKLWFKPEELVNYTHNAEKWIYGDN</sequence>
<gene>
    <name type="primary">NDK4</name>
    <name type="synonym">NDPKIII</name>
</gene>
<accession>Q8RXA8</accession>
<reference key="1">
    <citation type="submission" date="2002-03" db="EMBL/GenBank/DDBJ databases">
        <title>Spinach mRNA for nucleoside diphosphate kinase III.</title>
        <authorList>
            <person name="Zhang J."/>
            <person name="Hu Y."/>
        </authorList>
    </citation>
    <scope>NUCLEOTIDE SEQUENCE [MRNA]</scope>
</reference>
<reference key="2">
    <citation type="journal article" date="2004" name="Proc. Natl. Acad. Sci. U.S.A.">
        <title>Multiple evidence for nucleotide metabolism in the chloroplast thylakoid lumen.</title>
        <authorList>
            <person name="Spetea C."/>
            <person name="Hundal T."/>
            <person name="Lundin B."/>
            <person name="Heddad M."/>
            <person name="Adamska I."/>
            <person name="Andersson B."/>
        </authorList>
    </citation>
    <scope>SUBCELLULAR LOCATION</scope>
    <scope>CHARACTERIZATION</scope>
</reference>
<feature type="transit peptide" description="Chloroplast" evidence="3">
    <location>
        <begin position="1"/>
        <end status="unknown"/>
    </location>
</feature>
<feature type="transit peptide" description="Thylakoid">
    <location>
        <begin status="unknown"/>
        <end position="82"/>
    </location>
</feature>
<feature type="chain" id="PRO_0000019441" description="Nucleoside diphosphate kinase 4, chloroplastic">
    <location>
        <begin position="83"/>
        <end position="235"/>
    </location>
</feature>
<feature type="active site" description="Pros-phosphohistidine intermediate" evidence="1">
    <location>
        <position position="199"/>
    </location>
</feature>
<feature type="binding site" evidence="1">
    <location>
        <position position="93"/>
    </location>
    <ligand>
        <name>ATP</name>
        <dbReference type="ChEBI" id="CHEBI:30616"/>
    </ligand>
</feature>
<feature type="binding site" evidence="1">
    <location>
        <position position="141"/>
    </location>
    <ligand>
        <name>ATP</name>
        <dbReference type="ChEBI" id="CHEBI:30616"/>
    </ligand>
</feature>
<feature type="binding site" evidence="1">
    <location>
        <position position="169"/>
    </location>
    <ligand>
        <name>ATP</name>
        <dbReference type="ChEBI" id="CHEBI:30616"/>
    </ligand>
</feature>
<feature type="binding site" evidence="1">
    <location>
        <position position="175"/>
    </location>
    <ligand>
        <name>ATP</name>
        <dbReference type="ChEBI" id="CHEBI:30616"/>
    </ligand>
</feature>
<feature type="binding site" evidence="1">
    <location>
        <position position="186"/>
    </location>
    <ligand>
        <name>ATP</name>
        <dbReference type="ChEBI" id="CHEBI:30616"/>
    </ligand>
</feature>
<feature type="binding site" evidence="1">
    <location>
        <position position="196"/>
    </location>
    <ligand>
        <name>ATP</name>
        <dbReference type="ChEBI" id="CHEBI:30616"/>
    </ligand>
</feature>
<protein>
    <recommendedName>
        <fullName>Nucleoside diphosphate kinase 4, chloroplastic</fullName>
        <ecNumber>2.7.4.6</ecNumber>
    </recommendedName>
    <alternativeName>
        <fullName>Nucleoside diphosphate kinase III</fullName>
    </alternativeName>
    <alternativeName>
        <fullName>Nucleoside diphosphate kinase IV</fullName>
        <shortName>NDK IV</shortName>
        <shortName>NDP kinase IV</shortName>
        <shortName>NDPK IV</shortName>
    </alternativeName>
</protein>
<dbReference type="EC" id="2.7.4.6"/>
<dbReference type="EMBL" id="AY082428">
    <property type="protein sequence ID" value="AAL91136.1"/>
    <property type="molecule type" value="mRNA"/>
</dbReference>
<dbReference type="SMR" id="Q8RXA8"/>
<dbReference type="Proteomes" id="UP001155700">
    <property type="component" value="Unplaced"/>
</dbReference>
<dbReference type="GO" id="GO:0009543">
    <property type="term" value="C:chloroplast thylakoid lumen"/>
    <property type="evidence" value="ECO:0007669"/>
    <property type="project" value="UniProtKB-SubCell"/>
</dbReference>
<dbReference type="GO" id="GO:0005524">
    <property type="term" value="F:ATP binding"/>
    <property type="evidence" value="ECO:0007669"/>
    <property type="project" value="UniProtKB-KW"/>
</dbReference>
<dbReference type="GO" id="GO:0046872">
    <property type="term" value="F:metal ion binding"/>
    <property type="evidence" value="ECO:0007669"/>
    <property type="project" value="UniProtKB-KW"/>
</dbReference>
<dbReference type="GO" id="GO:0004550">
    <property type="term" value="F:nucleoside diphosphate kinase activity"/>
    <property type="evidence" value="ECO:0007669"/>
    <property type="project" value="UniProtKB-EC"/>
</dbReference>
<dbReference type="GO" id="GO:0006241">
    <property type="term" value="P:CTP biosynthetic process"/>
    <property type="evidence" value="ECO:0007669"/>
    <property type="project" value="InterPro"/>
</dbReference>
<dbReference type="GO" id="GO:0006183">
    <property type="term" value="P:GTP biosynthetic process"/>
    <property type="evidence" value="ECO:0007669"/>
    <property type="project" value="InterPro"/>
</dbReference>
<dbReference type="GO" id="GO:0006228">
    <property type="term" value="P:UTP biosynthetic process"/>
    <property type="evidence" value="ECO:0007669"/>
    <property type="project" value="InterPro"/>
</dbReference>
<dbReference type="CDD" id="cd04413">
    <property type="entry name" value="NDPk_I"/>
    <property type="match status" value="1"/>
</dbReference>
<dbReference type="FunFam" id="3.30.70.141:FF:000005">
    <property type="entry name" value="Nucleoside diphosphate kinase"/>
    <property type="match status" value="1"/>
</dbReference>
<dbReference type="Gene3D" id="3.30.70.141">
    <property type="entry name" value="Nucleoside diphosphate kinase-like domain"/>
    <property type="match status" value="1"/>
</dbReference>
<dbReference type="HAMAP" id="MF_00451">
    <property type="entry name" value="NDP_kinase"/>
    <property type="match status" value="1"/>
</dbReference>
<dbReference type="InterPro" id="IPR034907">
    <property type="entry name" value="NDK-like_dom"/>
</dbReference>
<dbReference type="InterPro" id="IPR036850">
    <property type="entry name" value="NDK-like_dom_sf"/>
</dbReference>
<dbReference type="InterPro" id="IPR001564">
    <property type="entry name" value="Nucleoside_diP_kinase"/>
</dbReference>
<dbReference type="InterPro" id="IPR023005">
    <property type="entry name" value="Nucleoside_diP_kinase_AS"/>
</dbReference>
<dbReference type="NCBIfam" id="NF001908">
    <property type="entry name" value="PRK00668.1"/>
    <property type="match status" value="1"/>
</dbReference>
<dbReference type="PANTHER" id="PTHR11349">
    <property type="entry name" value="NUCLEOSIDE DIPHOSPHATE KINASE"/>
    <property type="match status" value="1"/>
</dbReference>
<dbReference type="Pfam" id="PF00334">
    <property type="entry name" value="NDK"/>
    <property type="match status" value="1"/>
</dbReference>
<dbReference type="PRINTS" id="PR01243">
    <property type="entry name" value="NUCDPKINASE"/>
</dbReference>
<dbReference type="SMART" id="SM00562">
    <property type="entry name" value="NDK"/>
    <property type="match status" value="1"/>
</dbReference>
<dbReference type="SUPFAM" id="SSF54919">
    <property type="entry name" value="Nucleoside diphosphate kinase, NDK"/>
    <property type="match status" value="1"/>
</dbReference>
<dbReference type="PROSITE" id="PS00469">
    <property type="entry name" value="NDPK"/>
    <property type="match status" value="1"/>
</dbReference>
<dbReference type="PROSITE" id="PS51374">
    <property type="entry name" value="NDPK_LIKE"/>
    <property type="match status" value="1"/>
</dbReference>
<keyword id="KW-0067">ATP-binding</keyword>
<keyword id="KW-0150">Chloroplast</keyword>
<keyword id="KW-0418">Kinase</keyword>
<keyword id="KW-0460">Magnesium</keyword>
<keyword id="KW-0479">Metal-binding</keyword>
<keyword id="KW-0546">Nucleotide metabolism</keyword>
<keyword id="KW-0547">Nucleotide-binding</keyword>
<keyword id="KW-0597">Phosphoprotein</keyword>
<keyword id="KW-0934">Plastid</keyword>
<keyword id="KW-1185">Reference proteome</keyword>
<keyword id="KW-0793">Thylakoid</keyword>
<keyword id="KW-0808">Transferase</keyword>
<keyword id="KW-0809">Transit peptide</keyword>